<feature type="chain" id="PRO_0000313330" description="DNA ligase">
    <location>
        <begin position="1"/>
        <end position="829"/>
    </location>
</feature>
<feature type="domain" description="BRCT" evidence="1">
    <location>
        <begin position="752"/>
        <end position="829"/>
    </location>
</feature>
<feature type="region of interest" description="Disordered" evidence="2">
    <location>
        <begin position="534"/>
        <end position="564"/>
    </location>
</feature>
<feature type="active site" description="N6-AMP-lysine intermediate" evidence="1">
    <location>
        <position position="129"/>
    </location>
</feature>
<feature type="binding site" evidence="1">
    <location>
        <begin position="38"/>
        <end position="42"/>
    </location>
    <ligand>
        <name>NAD(+)</name>
        <dbReference type="ChEBI" id="CHEBI:57540"/>
    </ligand>
</feature>
<feature type="binding site" evidence="1">
    <location>
        <begin position="87"/>
        <end position="88"/>
    </location>
    <ligand>
        <name>NAD(+)</name>
        <dbReference type="ChEBI" id="CHEBI:57540"/>
    </ligand>
</feature>
<feature type="binding site" evidence="1">
    <location>
        <position position="127"/>
    </location>
    <ligand>
        <name>NAD(+)</name>
        <dbReference type="ChEBI" id="CHEBI:57540"/>
    </ligand>
</feature>
<feature type="binding site" evidence="1">
    <location>
        <position position="150"/>
    </location>
    <ligand>
        <name>NAD(+)</name>
        <dbReference type="ChEBI" id="CHEBI:57540"/>
    </ligand>
</feature>
<feature type="binding site" evidence="1">
    <location>
        <position position="187"/>
    </location>
    <ligand>
        <name>NAD(+)</name>
        <dbReference type="ChEBI" id="CHEBI:57540"/>
    </ligand>
</feature>
<feature type="binding site" evidence="1">
    <location>
        <position position="305"/>
    </location>
    <ligand>
        <name>NAD(+)</name>
        <dbReference type="ChEBI" id="CHEBI:57540"/>
    </ligand>
</feature>
<feature type="binding site" evidence="1">
    <location>
        <position position="329"/>
    </location>
    <ligand>
        <name>NAD(+)</name>
        <dbReference type="ChEBI" id="CHEBI:57540"/>
    </ligand>
</feature>
<feature type="binding site" evidence="1">
    <location>
        <position position="455"/>
    </location>
    <ligand>
        <name>Zn(2+)</name>
        <dbReference type="ChEBI" id="CHEBI:29105"/>
    </ligand>
</feature>
<feature type="binding site" evidence="1">
    <location>
        <position position="458"/>
    </location>
    <ligand>
        <name>Zn(2+)</name>
        <dbReference type="ChEBI" id="CHEBI:29105"/>
    </ligand>
</feature>
<feature type="binding site" evidence="1">
    <location>
        <position position="473"/>
    </location>
    <ligand>
        <name>Zn(2+)</name>
        <dbReference type="ChEBI" id="CHEBI:29105"/>
    </ligand>
</feature>
<feature type="binding site" evidence="1">
    <location>
        <position position="479"/>
    </location>
    <ligand>
        <name>Zn(2+)</name>
        <dbReference type="ChEBI" id="CHEBI:29105"/>
    </ligand>
</feature>
<organism>
    <name type="scientific">Neisseria gonorrhoeae (strain ATCC 700825 / FA 1090)</name>
    <dbReference type="NCBI Taxonomy" id="242231"/>
    <lineage>
        <taxon>Bacteria</taxon>
        <taxon>Pseudomonadati</taxon>
        <taxon>Pseudomonadota</taxon>
        <taxon>Betaproteobacteria</taxon>
        <taxon>Neisseriales</taxon>
        <taxon>Neisseriaceae</taxon>
        <taxon>Neisseria</taxon>
    </lineage>
</organism>
<accession>Q5F9Z9</accession>
<keyword id="KW-0227">DNA damage</keyword>
<keyword id="KW-0234">DNA repair</keyword>
<keyword id="KW-0235">DNA replication</keyword>
<keyword id="KW-0436">Ligase</keyword>
<keyword id="KW-0460">Magnesium</keyword>
<keyword id="KW-0464">Manganese</keyword>
<keyword id="KW-0479">Metal-binding</keyword>
<keyword id="KW-0520">NAD</keyword>
<keyword id="KW-1185">Reference proteome</keyword>
<keyword id="KW-0862">Zinc</keyword>
<evidence type="ECO:0000255" key="1">
    <source>
        <dbReference type="HAMAP-Rule" id="MF_01588"/>
    </source>
</evidence>
<evidence type="ECO:0000256" key="2">
    <source>
        <dbReference type="SAM" id="MobiDB-lite"/>
    </source>
</evidence>
<comment type="function">
    <text evidence="1">DNA ligase that catalyzes the formation of phosphodiester linkages between 5'-phosphoryl and 3'-hydroxyl groups in double-stranded DNA using NAD as a coenzyme and as the energy source for the reaction. It is essential for DNA replication and repair of damaged DNA.</text>
</comment>
<comment type="catalytic activity">
    <reaction evidence="1">
        <text>NAD(+) + (deoxyribonucleotide)n-3'-hydroxyl + 5'-phospho-(deoxyribonucleotide)m = (deoxyribonucleotide)n+m + AMP + beta-nicotinamide D-nucleotide.</text>
        <dbReference type="EC" id="6.5.1.2"/>
    </reaction>
</comment>
<comment type="cofactor">
    <cofactor evidence="1">
        <name>Mg(2+)</name>
        <dbReference type="ChEBI" id="CHEBI:18420"/>
    </cofactor>
    <cofactor evidence="1">
        <name>Mn(2+)</name>
        <dbReference type="ChEBI" id="CHEBI:29035"/>
    </cofactor>
</comment>
<comment type="similarity">
    <text evidence="1">Belongs to the NAD-dependent DNA ligase family. LigA subfamily.</text>
</comment>
<gene>
    <name evidence="1" type="primary">ligA</name>
    <name type="ordered locus">NGO_0235</name>
</gene>
<proteinExistence type="inferred from homology"/>
<name>DNLJ_NEIG1</name>
<dbReference type="EC" id="6.5.1.2" evidence="1"/>
<dbReference type="EMBL" id="AE004969">
    <property type="protein sequence ID" value="AAW88988.2"/>
    <property type="molecule type" value="Genomic_DNA"/>
</dbReference>
<dbReference type="SMR" id="Q5F9Z9"/>
<dbReference type="STRING" id="242231.NGO_0235"/>
<dbReference type="KEGG" id="ngo:NGO_0235"/>
<dbReference type="PATRIC" id="fig|242231.10.peg.291"/>
<dbReference type="HOGENOM" id="CLU_007764_2_1_4"/>
<dbReference type="Proteomes" id="UP000000535">
    <property type="component" value="Chromosome"/>
</dbReference>
<dbReference type="GO" id="GO:0005829">
    <property type="term" value="C:cytosol"/>
    <property type="evidence" value="ECO:0007669"/>
    <property type="project" value="TreeGrafter"/>
</dbReference>
<dbReference type="GO" id="GO:0003911">
    <property type="term" value="F:DNA ligase (NAD+) activity"/>
    <property type="evidence" value="ECO:0007669"/>
    <property type="project" value="UniProtKB-UniRule"/>
</dbReference>
<dbReference type="GO" id="GO:0046872">
    <property type="term" value="F:metal ion binding"/>
    <property type="evidence" value="ECO:0007669"/>
    <property type="project" value="UniProtKB-KW"/>
</dbReference>
<dbReference type="GO" id="GO:0006281">
    <property type="term" value="P:DNA repair"/>
    <property type="evidence" value="ECO:0007669"/>
    <property type="project" value="UniProtKB-KW"/>
</dbReference>
<dbReference type="GO" id="GO:0006260">
    <property type="term" value="P:DNA replication"/>
    <property type="evidence" value="ECO:0007669"/>
    <property type="project" value="UniProtKB-KW"/>
</dbReference>
<dbReference type="CDD" id="cd17748">
    <property type="entry name" value="BRCT_DNA_ligase_like"/>
    <property type="match status" value="1"/>
</dbReference>
<dbReference type="CDD" id="cd00114">
    <property type="entry name" value="LIGANc"/>
    <property type="match status" value="1"/>
</dbReference>
<dbReference type="FunFam" id="1.10.150.20:FF:000006">
    <property type="entry name" value="DNA ligase"/>
    <property type="match status" value="1"/>
</dbReference>
<dbReference type="FunFam" id="1.10.287.610:FF:000002">
    <property type="entry name" value="DNA ligase"/>
    <property type="match status" value="1"/>
</dbReference>
<dbReference type="FunFam" id="2.40.50.140:FF:000012">
    <property type="entry name" value="DNA ligase"/>
    <property type="match status" value="1"/>
</dbReference>
<dbReference type="FunFam" id="3.30.470.30:FF:000001">
    <property type="entry name" value="DNA ligase"/>
    <property type="match status" value="1"/>
</dbReference>
<dbReference type="FunFam" id="3.40.50.10190:FF:000045">
    <property type="entry name" value="DNA ligase"/>
    <property type="match status" value="1"/>
</dbReference>
<dbReference type="Gene3D" id="6.20.10.30">
    <property type="match status" value="1"/>
</dbReference>
<dbReference type="Gene3D" id="1.10.150.20">
    <property type="entry name" value="5' to 3' exonuclease, C-terminal subdomain"/>
    <property type="match status" value="2"/>
</dbReference>
<dbReference type="Gene3D" id="3.40.50.10190">
    <property type="entry name" value="BRCT domain"/>
    <property type="match status" value="1"/>
</dbReference>
<dbReference type="Gene3D" id="3.30.470.30">
    <property type="entry name" value="DNA ligase/mRNA capping enzyme"/>
    <property type="match status" value="1"/>
</dbReference>
<dbReference type="Gene3D" id="1.10.287.610">
    <property type="entry name" value="Helix hairpin bin"/>
    <property type="match status" value="1"/>
</dbReference>
<dbReference type="Gene3D" id="2.40.50.140">
    <property type="entry name" value="Nucleic acid-binding proteins"/>
    <property type="match status" value="1"/>
</dbReference>
<dbReference type="HAMAP" id="MF_01588">
    <property type="entry name" value="DNA_ligase_A"/>
    <property type="match status" value="1"/>
</dbReference>
<dbReference type="InterPro" id="IPR001357">
    <property type="entry name" value="BRCT_dom"/>
</dbReference>
<dbReference type="InterPro" id="IPR036420">
    <property type="entry name" value="BRCT_dom_sf"/>
</dbReference>
<dbReference type="InterPro" id="IPR041663">
    <property type="entry name" value="DisA/LigA_HHH"/>
</dbReference>
<dbReference type="InterPro" id="IPR001679">
    <property type="entry name" value="DNA_ligase"/>
</dbReference>
<dbReference type="InterPro" id="IPR018239">
    <property type="entry name" value="DNA_ligase_AS"/>
</dbReference>
<dbReference type="InterPro" id="IPR033136">
    <property type="entry name" value="DNA_ligase_CS"/>
</dbReference>
<dbReference type="InterPro" id="IPR013839">
    <property type="entry name" value="DNAligase_adenylation"/>
</dbReference>
<dbReference type="InterPro" id="IPR013840">
    <property type="entry name" value="DNAligase_N"/>
</dbReference>
<dbReference type="InterPro" id="IPR012340">
    <property type="entry name" value="NA-bd_OB-fold"/>
</dbReference>
<dbReference type="InterPro" id="IPR004150">
    <property type="entry name" value="NAD_DNA_ligase_OB"/>
</dbReference>
<dbReference type="InterPro" id="IPR010994">
    <property type="entry name" value="RuvA_2-like"/>
</dbReference>
<dbReference type="InterPro" id="IPR004149">
    <property type="entry name" value="Znf_DNAligase_C4"/>
</dbReference>
<dbReference type="NCBIfam" id="TIGR00575">
    <property type="entry name" value="dnlj"/>
    <property type="match status" value="1"/>
</dbReference>
<dbReference type="NCBIfam" id="NF005932">
    <property type="entry name" value="PRK07956.1"/>
    <property type="match status" value="1"/>
</dbReference>
<dbReference type="PANTHER" id="PTHR23389">
    <property type="entry name" value="CHROMOSOME TRANSMISSION FIDELITY FACTOR 18"/>
    <property type="match status" value="1"/>
</dbReference>
<dbReference type="PANTHER" id="PTHR23389:SF9">
    <property type="entry name" value="DNA LIGASE"/>
    <property type="match status" value="1"/>
</dbReference>
<dbReference type="Pfam" id="PF00533">
    <property type="entry name" value="BRCT"/>
    <property type="match status" value="1"/>
</dbReference>
<dbReference type="Pfam" id="PF01653">
    <property type="entry name" value="DNA_ligase_aden"/>
    <property type="match status" value="1"/>
</dbReference>
<dbReference type="Pfam" id="PF03120">
    <property type="entry name" value="DNA_ligase_OB"/>
    <property type="match status" value="1"/>
</dbReference>
<dbReference type="Pfam" id="PF03119">
    <property type="entry name" value="DNA_ligase_ZBD"/>
    <property type="match status" value="1"/>
</dbReference>
<dbReference type="Pfam" id="PF12826">
    <property type="entry name" value="HHH_2"/>
    <property type="match status" value="1"/>
</dbReference>
<dbReference type="Pfam" id="PF22745">
    <property type="entry name" value="Nlig-Ia"/>
    <property type="match status" value="1"/>
</dbReference>
<dbReference type="PIRSF" id="PIRSF001604">
    <property type="entry name" value="LigA"/>
    <property type="match status" value="1"/>
</dbReference>
<dbReference type="SMART" id="SM00292">
    <property type="entry name" value="BRCT"/>
    <property type="match status" value="1"/>
</dbReference>
<dbReference type="SMART" id="SM00532">
    <property type="entry name" value="LIGANc"/>
    <property type="match status" value="1"/>
</dbReference>
<dbReference type="SUPFAM" id="SSF52113">
    <property type="entry name" value="BRCT domain"/>
    <property type="match status" value="1"/>
</dbReference>
<dbReference type="SUPFAM" id="SSF56091">
    <property type="entry name" value="DNA ligase/mRNA capping enzyme, catalytic domain"/>
    <property type="match status" value="1"/>
</dbReference>
<dbReference type="SUPFAM" id="SSF50249">
    <property type="entry name" value="Nucleic acid-binding proteins"/>
    <property type="match status" value="1"/>
</dbReference>
<dbReference type="SUPFAM" id="SSF47781">
    <property type="entry name" value="RuvA domain 2-like"/>
    <property type="match status" value="1"/>
</dbReference>
<dbReference type="PROSITE" id="PS50172">
    <property type="entry name" value="BRCT"/>
    <property type="match status" value="1"/>
</dbReference>
<dbReference type="PROSITE" id="PS01055">
    <property type="entry name" value="DNA_LIGASE_N1"/>
    <property type="match status" value="1"/>
</dbReference>
<dbReference type="PROSITE" id="PS01056">
    <property type="entry name" value="DNA_LIGASE_N2"/>
    <property type="match status" value="1"/>
</dbReference>
<sequence>MNLYESMNPTAQRIHELTDLLNRYAYEYYTLDAPSIPDAEYDRLFRELEALERNHPELKLPDSPTQRVGGEPLAGFAEVRHEVPMLSLTNAFSPQDENGVFDHAEMYAFDQRVRDGLDGGNPEYVIEPKFDGLAISLLYRDGVLVQAATRGDGTTGEDVTRNVKTVSNIPLRLHGENVPELIEVRGEVLMLKADFAALNQRQTENGQKPFANPRNAAAGSLRQLDSRITAQRKLHFFPYSVARQQGGLIAEEHIQELAYFQALGFSLPNGNFGCFKNIGEVLAFYEHMQQKRPELPYEIDGTVVKVNSLAQQHELGFISRAPRWAVAHKFPAEEALTIVEAIDVQIGRTGAVTPVARLQPVFVGGVTVTNATLHNQDEVSRKDVRVGDTVVVRRAGDVIPEVVRVIFERRPMQETAVAVSDGIGHQQDDLFAETPSAKQTESVPLHKPYRLPARCPICRSEIEREEGEAVARCSGGMLCQAQRAQGLIHFASRKAMDIDGLGEKQIEQLVAQDLVRHFADLYRIDIPTLQKMKETADKGSSENENGDAETVSGDLSKYNTQNGKKQPTKWAQNILAGIESGKTPELARFLFALGIRHVGERTAKTLAQAFGTLERVRRAPEPVLACLPDIGTVVARSIAHFFAQAEQQAMIDELLAAGVAPQAQAVSLPAAQYAGPQRWITRLPGFKISENKAQALWELAGQSIEGLQNDKALPADWQAWRSKAQNTALLENLKTFFAQMPSEDEAAQGSDGINKAVAGKTFVLTGTLPTFKRDQAQALIEAAGGKVSGSVSKKTDYVVAGETAGSKLEKANALGVSVLSEAELLTLLC</sequence>
<reference key="1">
    <citation type="submission" date="2003-03" db="EMBL/GenBank/DDBJ databases">
        <title>The complete genome sequence of Neisseria gonorrhoeae.</title>
        <authorList>
            <person name="Lewis L.A."/>
            <person name="Gillaspy A.F."/>
            <person name="McLaughlin R.E."/>
            <person name="Gipson M."/>
            <person name="Ducey T.F."/>
            <person name="Ownbey T."/>
            <person name="Hartman K."/>
            <person name="Nydick C."/>
            <person name="Carson M.B."/>
            <person name="Vaughn J."/>
            <person name="Thomson C."/>
            <person name="Song L."/>
            <person name="Lin S."/>
            <person name="Yuan X."/>
            <person name="Najar F."/>
            <person name="Zhan M."/>
            <person name="Ren Q."/>
            <person name="Zhu H."/>
            <person name="Qi S."/>
            <person name="Kenton S.M."/>
            <person name="Lai H."/>
            <person name="White J.D."/>
            <person name="Clifton S."/>
            <person name="Roe B.A."/>
            <person name="Dyer D.W."/>
        </authorList>
    </citation>
    <scope>NUCLEOTIDE SEQUENCE [LARGE SCALE GENOMIC DNA]</scope>
    <source>
        <strain>ATCC 700825 / FA 1090</strain>
    </source>
</reference>
<protein>
    <recommendedName>
        <fullName evidence="1">DNA ligase</fullName>
        <ecNumber evidence="1">6.5.1.2</ecNumber>
    </recommendedName>
    <alternativeName>
        <fullName evidence="1">Polydeoxyribonucleotide synthase [NAD(+)]</fullName>
    </alternativeName>
</protein>